<gene>
    <name type="primary">tif6</name>
    <name type="ORF">SPCC1919.09</name>
</gene>
<dbReference type="EMBL" id="CU329672">
    <property type="protein sequence ID" value="CAA22640.1"/>
    <property type="molecule type" value="Genomic_DNA"/>
</dbReference>
<dbReference type="PIR" id="T41234">
    <property type="entry name" value="T41234"/>
</dbReference>
<dbReference type="RefSeq" id="NP_588491.1">
    <property type="nucleotide sequence ID" value="NM_001023481.2"/>
</dbReference>
<dbReference type="PDB" id="8ESQ">
    <property type="method" value="EM"/>
    <property type="resolution" value="2.80 A"/>
    <property type="chains" value="y=1-244"/>
</dbReference>
<dbReference type="PDB" id="8ESR">
    <property type="method" value="EM"/>
    <property type="resolution" value="3.20 A"/>
    <property type="chains" value="y=1-244"/>
</dbReference>
<dbReference type="PDB" id="8ETC">
    <property type="method" value="EM"/>
    <property type="resolution" value="3.10 A"/>
    <property type="chains" value="y=1-244"/>
</dbReference>
<dbReference type="PDB" id="8ETG">
    <property type="method" value="EM"/>
    <property type="resolution" value="3.40 A"/>
    <property type="chains" value="y=1-244"/>
</dbReference>
<dbReference type="PDB" id="8ETH">
    <property type="method" value="EM"/>
    <property type="resolution" value="3.80 A"/>
    <property type="chains" value="y=1-244"/>
</dbReference>
<dbReference type="PDB" id="8ETI">
    <property type="method" value="EM"/>
    <property type="resolution" value="3.70 A"/>
    <property type="chains" value="y=1-244"/>
</dbReference>
<dbReference type="PDB" id="8ETJ">
    <property type="method" value="EM"/>
    <property type="resolution" value="3.20 A"/>
    <property type="chains" value="y=1-244"/>
</dbReference>
<dbReference type="PDB" id="8EUP">
    <property type="method" value="EM"/>
    <property type="resolution" value="3.10 A"/>
    <property type="chains" value="y=1-244"/>
</dbReference>
<dbReference type="PDB" id="8EUY">
    <property type="method" value="EM"/>
    <property type="resolution" value="3.00 A"/>
    <property type="chains" value="y=1-244"/>
</dbReference>
<dbReference type="PDB" id="8EV3">
    <property type="method" value="EM"/>
    <property type="resolution" value="3.00 A"/>
    <property type="chains" value="y=1-244"/>
</dbReference>
<dbReference type="PDBsum" id="8ESQ"/>
<dbReference type="PDBsum" id="8ESR"/>
<dbReference type="PDBsum" id="8ETC"/>
<dbReference type="PDBsum" id="8ETG"/>
<dbReference type="PDBsum" id="8ETH"/>
<dbReference type="PDBsum" id="8ETI"/>
<dbReference type="PDBsum" id="8ETJ"/>
<dbReference type="PDBsum" id="8EUP"/>
<dbReference type="PDBsum" id="8EUY"/>
<dbReference type="PDBsum" id="8EV3"/>
<dbReference type="SMR" id="O94476"/>
<dbReference type="BioGRID" id="275698">
    <property type="interactions" value="4"/>
</dbReference>
<dbReference type="FunCoup" id="O94476">
    <property type="interactions" value="575"/>
</dbReference>
<dbReference type="STRING" id="284812.O94476"/>
<dbReference type="iPTMnet" id="O94476"/>
<dbReference type="PaxDb" id="4896-SPCC1919.09.1"/>
<dbReference type="EnsemblFungi" id="SPCC1919.09.1">
    <property type="protein sequence ID" value="SPCC1919.09.1:pep"/>
    <property type="gene ID" value="SPCC1919.09"/>
</dbReference>
<dbReference type="GeneID" id="2539126"/>
<dbReference type="KEGG" id="spo:2539126"/>
<dbReference type="PomBase" id="SPCC1919.09">
    <property type="gene designation" value="tif6"/>
</dbReference>
<dbReference type="VEuPathDB" id="FungiDB:SPCC1919.09"/>
<dbReference type="eggNOG" id="KOG3185">
    <property type="taxonomic scope" value="Eukaryota"/>
</dbReference>
<dbReference type="HOGENOM" id="CLU_071894_0_0_1"/>
<dbReference type="InParanoid" id="O94476"/>
<dbReference type="OMA" id="WCAFCGM"/>
<dbReference type="PhylomeDB" id="O94476"/>
<dbReference type="PRO" id="PR:O94476"/>
<dbReference type="Proteomes" id="UP000002485">
    <property type="component" value="Chromosome III"/>
</dbReference>
<dbReference type="GO" id="GO:0005829">
    <property type="term" value="C:cytosol"/>
    <property type="evidence" value="ECO:0007005"/>
    <property type="project" value="PomBase"/>
</dbReference>
<dbReference type="GO" id="GO:0005730">
    <property type="term" value="C:nucleolus"/>
    <property type="evidence" value="ECO:0007669"/>
    <property type="project" value="UniProtKB-SubCell"/>
</dbReference>
<dbReference type="GO" id="GO:0005634">
    <property type="term" value="C:nucleus"/>
    <property type="evidence" value="ECO:0007005"/>
    <property type="project" value="PomBase"/>
</dbReference>
<dbReference type="GO" id="GO:0030684">
    <property type="term" value="C:preribosome"/>
    <property type="evidence" value="ECO:0000314"/>
    <property type="project" value="PomBase"/>
</dbReference>
<dbReference type="GO" id="GO:0043023">
    <property type="term" value="F:ribosomal large subunit binding"/>
    <property type="evidence" value="ECO:0000318"/>
    <property type="project" value="GO_Central"/>
</dbReference>
<dbReference type="GO" id="GO:0003743">
    <property type="term" value="F:translation initiation factor activity"/>
    <property type="evidence" value="ECO:0007669"/>
    <property type="project" value="UniProtKB-UniRule"/>
</dbReference>
<dbReference type="GO" id="GO:1902626">
    <property type="term" value="P:assembly of large subunit precursor of preribosome"/>
    <property type="evidence" value="ECO:0000269"/>
    <property type="project" value="PomBase"/>
</dbReference>
<dbReference type="GO" id="GO:0042256">
    <property type="term" value="P:cytosolic ribosome assembly"/>
    <property type="evidence" value="ECO:0007669"/>
    <property type="project" value="UniProtKB-UniRule"/>
</dbReference>
<dbReference type="GO" id="GO:0000460">
    <property type="term" value="P:maturation of 5.8S rRNA"/>
    <property type="evidence" value="ECO:0000318"/>
    <property type="project" value="GO_Central"/>
</dbReference>
<dbReference type="GO" id="GO:0000470">
    <property type="term" value="P:maturation of LSU-rRNA"/>
    <property type="evidence" value="ECO:0000318"/>
    <property type="project" value="GO_Central"/>
</dbReference>
<dbReference type="GO" id="GO:0000054">
    <property type="term" value="P:ribosomal subunit export from nucleus"/>
    <property type="evidence" value="ECO:0000318"/>
    <property type="project" value="GO_Central"/>
</dbReference>
<dbReference type="CDD" id="cd00527">
    <property type="entry name" value="IF6"/>
    <property type="match status" value="1"/>
</dbReference>
<dbReference type="FunFam" id="3.75.10.10:FF:000001">
    <property type="entry name" value="Eukaryotic translation initiation factor 6"/>
    <property type="match status" value="1"/>
</dbReference>
<dbReference type="Gene3D" id="3.75.10.10">
    <property type="entry name" value="L-arginine/glycine Amidinotransferase, Chain A"/>
    <property type="match status" value="1"/>
</dbReference>
<dbReference type="HAMAP" id="MF_00032">
    <property type="entry name" value="eIF_6"/>
    <property type="match status" value="1"/>
</dbReference>
<dbReference type="InterPro" id="IPR002769">
    <property type="entry name" value="eIF6"/>
</dbReference>
<dbReference type="NCBIfam" id="TIGR00323">
    <property type="entry name" value="eIF-6"/>
    <property type="match status" value="1"/>
</dbReference>
<dbReference type="PANTHER" id="PTHR10784">
    <property type="entry name" value="TRANSLATION INITIATION FACTOR 6"/>
    <property type="match status" value="1"/>
</dbReference>
<dbReference type="Pfam" id="PF01912">
    <property type="entry name" value="eIF-6"/>
    <property type="match status" value="1"/>
</dbReference>
<dbReference type="PIRSF" id="PIRSF006413">
    <property type="entry name" value="IF-6"/>
    <property type="match status" value="1"/>
</dbReference>
<dbReference type="SMART" id="SM00654">
    <property type="entry name" value="eIF6"/>
    <property type="match status" value="1"/>
</dbReference>
<dbReference type="SUPFAM" id="SSF55909">
    <property type="entry name" value="Pentein"/>
    <property type="match status" value="1"/>
</dbReference>
<proteinExistence type="evidence at protein level"/>
<evidence type="ECO:0000255" key="1">
    <source>
        <dbReference type="HAMAP-Rule" id="MF_03132"/>
    </source>
</evidence>
<evidence type="ECO:0000269" key="2">
    <source>
    </source>
</evidence>
<evidence type="ECO:0007829" key="3">
    <source>
        <dbReference type="PDB" id="8ETC"/>
    </source>
</evidence>
<evidence type="ECO:0007829" key="4">
    <source>
        <dbReference type="PDB" id="8ETG"/>
    </source>
</evidence>
<evidence type="ECO:0007829" key="5">
    <source>
        <dbReference type="PDB" id="8EUP"/>
    </source>
</evidence>
<evidence type="ECO:0007829" key="6">
    <source>
        <dbReference type="PDB" id="8EUY"/>
    </source>
</evidence>
<evidence type="ECO:0007829" key="7">
    <source>
        <dbReference type="PDB" id="8EV3"/>
    </source>
</evidence>
<accession>O94476</accession>
<feature type="chain" id="PRO_0000153741" description="Eukaryotic translation initiation factor 6">
    <location>
        <begin position="1"/>
        <end position="244"/>
    </location>
</feature>
<feature type="modified residue" description="Phosphoserine; by CK1" evidence="1">
    <location>
        <position position="174"/>
    </location>
</feature>
<feature type="modified residue" description="Phosphoserine; by CK1" evidence="1">
    <location>
        <position position="175"/>
    </location>
</feature>
<feature type="strand" evidence="3">
    <location>
        <begin position="3"/>
        <end position="5"/>
    </location>
</feature>
<feature type="helix" evidence="6">
    <location>
        <begin position="13"/>
        <end position="16"/>
    </location>
</feature>
<feature type="strand" evidence="3">
    <location>
        <begin position="17"/>
        <end position="19"/>
    </location>
</feature>
<feature type="strand" evidence="3">
    <location>
        <begin position="24"/>
        <end position="26"/>
    </location>
</feature>
<feature type="strand" evidence="3">
    <location>
        <begin position="28"/>
        <end position="30"/>
    </location>
</feature>
<feature type="helix" evidence="6">
    <location>
        <begin position="32"/>
        <end position="41"/>
    </location>
</feature>
<feature type="turn" evidence="6">
    <location>
        <begin position="42"/>
        <end position="45"/>
    </location>
</feature>
<feature type="strand" evidence="3">
    <location>
        <begin position="48"/>
        <end position="50"/>
    </location>
</feature>
<feature type="strand" evidence="3">
    <location>
        <begin position="53"/>
        <end position="55"/>
    </location>
</feature>
<feature type="helix" evidence="6">
    <location>
        <begin position="59"/>
        <end position="62"/>
    </location>
</feature>
<feature type="strand" evidence="7">
    <location>
        <begin position="64"/>
        <end position="66"/>
    </location>
</feature>
<feature type="strand" evidence="6">
    <location>
        <begin position="71"/>
        <end position="73"/>
    </location>
</feature>
<feature type="strand" evidence="5">
    <location>
        <begin position="74"/>
        <end position="76"/>
    </location>
</feature>
<feature type="helix" evidence="6">
    <location>
        <begin position="78"/>
        <end position="87"/>
    </location>
</feature>
<feature type="strand" evidence="6">
    <location>
        <begin position="95"/>
        <end position="97"/>
    </location>
</feature>
<feature type="strand" evidence="5">
    <location>
        <begin position="100"/>
        <end position="103"/>
    </location>
</feature>
<feature type="helix" evidence="6">
    <location>
        <begin position="104"/>
        <end position="107"/>
    </location>
</feature>
<feature type="strand" evidence="3">
    <location>
        <begin position="108"/>
        <end position="110"/>
    </location>
</feature>
<feature type="strand" evidence="6">
    <location>
        <begin position="112"/>
        <end position="114"/>
    </location>
</feature>
<feature type="strand" evidence="7">
    <location>
        <begin position="119"/>
        <end position="121"/>
    </location>
</feature>
<feature type="helix" evidence="6">
    <location>
        <begin position="123"/>
        <end position="133"/>
    </location>
</feature>
<feature type="strand" evidence="7">
    <location>
        <begin position="135"/>
        <end position="139"/>
    </location>
</feature>
<feature type="helix" evidence="6">
    <location>
        <begin position="148"/>
        <end position="151"/>
    </location>
</feature>
<feature type="strand" evidence="4">
    <location>
        <begin position="152"/>
        <end position="154"/>
    </location>
</feature>
<feature type="strand" evidence="3">
    <location>
        <begin position="159"/>
        <end position="161"/>
    </location>
</feature>
<feature type="strand" evidence="3">
    <location>
        <begin position="163"/>
        <end position="165"/>
    </location>
</feature>
<feature type="helix" evidence="3">
    <location>
        <begin position="167"/>
        <end position="177"/>
    </location>
</feature>
<feature type="strand" evidence="3">
    <location>
        <begin position="181"/>
        <end position="183"/>
    </location>
</feature>
<feature type="helix" evidence="6">
    <location>
        <begin position="186"/>
        <end position="189"/>
    </location>
</feature>
<feature type="helix" evidence="6">
    <location>
        <begin position="193"/>
        <end position="196"/>
    </location>
</feature>
<feature type="strand" evidence="7">
    <location>
        <begin position="197"/>
        <end position="199"/>
    </location>
</feature>
<feature type="strand" evidence="7">
    <location>
        <begin position="204"/>
        <end position="206"/>
    </location>
</feature>
<feature type="strand" evidence="7">
    <location>
        <begin position="208"/>
        <end position="210"/>
    </location>
</feature>
<feature type="helix" evidence="6">
    <location>
        <begin position="212"/>
        <end position="221"/>
    </location>
</feature>
<sequence>MALRAQFENSNEIGVFSNLTNSYALVALGGSENFYSVFEAELGDVVPVVHTTIGGTRIIGRLTCGNRKGLLVPSSTTDNELQHLRNSLPDPVKIQRVDERLSALGNIVACNDYVALVHPDIERETEEIIADVLDVEVFRQTVAGNVLTGSYCALSNQGALVHPRTSIQEQDELSSLLQVPLVAGTINRGSDVIGAGLVVNDWCAFAGLDTTATELAVCESIFKLQDAQPSAIISNRDTLVESYT</sequence>
<organism>
    <name type="scientific">Schizosaccharomyces pombe (strain 972 / ATCC 24843)</name>
    <name type="common">Fission yeast</name>
    <dbReference type="NCBI Taxonomy" id="284812"/>
    <lineage>
        <taxon>Eukaryota</taxon>
        <taxon>Fungi</taxon>
        <taxon>Dikarya</taxon>
        <taxon>Ascomycota</taxon>
        <taxon>Taphrinomycotina</taxon>
        <taxon>Schizosaccharomycetes</taxon>
        <taxon>Schizosaccharomycetales</taxon>
        <taxon>Schizosaccharomycetaceae</taxon>
        <taxon>Schizosaccharomyces</taxon>
    </lineage>
</organism>
<reference key="1">
    <citation type="journal article" date="2002" name="Nature">
        <title>The genome sequence of Schizosaccharomyces pombe.</title>
        <authorList>
            <person name="Wood V."/>
            <person name="Gwilliam R."/>
            <person name="Rajandream M.A."/>
            <person name="Lyne M.H."/>
            <person name="Lyne R."/>
            <person name="Stewart A."/>
            <person name="Sgouros J.G."/>
            <person name="Peat N."/>
            <person name="Hayles J."/>
            <person name="Baker S.G."/>
            <person name="Basham D."/>
            <person name="Bowman S."/>
            <person name="Brooks K."/>
            <person name="Brown D."/>
            <person name="Brown S."/>
            <person name="Chillingworth T."/>
            <person name="Churcher C.M."/>
            <person name="Collins M."/>
            <person name="Connor R."/>
            <person name="Cronin A."/>
            <person name="Davis P."/>
            <person name="Feltwell T."/>
            <person name="Fraser A."/>
            <person name="Gentles S."/>
            <person name="Goble A."/>
            <person name="Hamlin N."/>
            <person name="Harris D.E."/>
            <person name="Hidalgo J."/>
            <person name="Hodgson G."/>
            <person name="Holroyd S."/>
            <person name="Hornsby T."/>
            <person name="Howarth S."/>
            <person name="Huckle E.J."/>
            <person name="Hunt S."/>
            <person name="Jagels K."/>
            <person name="James K.D."/>
            <person name="Jones L."/>
            <person name="Jones M."/>
            <person name="Leather S."/>
            <person name="McDonald S."/>
            <person name="McLean J."/>
            <person name="Mooney P."/>
            <person name="Moule S."/>
            <person name="Mungall K.L."/>
            <person name="Murphy L.D."/>
            <person name="Niblett D."/>
            <person name="Odell C."/>
            <person name="Oliver K."/>
            <person name="O'Neil S."/>
            <person name="Pearson D."/>
            <person name="Quail M.A."/>
            <person name="Rabbinowitsch E."/>
            <person name="Rutherford K.M."/>
            <person name="Rutter S."/>
            <person name="Saunders D."/>
            <person name="Seeger K."/>
            <person name="Sharp S."/>
            <person name="Skelton J."/>
            <person name="Simmonds M.N."/>
            <person name="Squares R."/>
            <person name="Squares S."/>
            <person name="Stevens K."/>
            <person name="Taylor K."/>
            <person name="Taylor R.G."/>
            <person name="Tivey A."/>
            <person name="Walsh S.V."/>
            <person name="Warren T."/>
            <person name="Whitehead S."/>
            <person name="Woodward J.R."/>
            <person name="Volckaert G."/>
            <person name="Aert R."/>
            <person name="Robben J."/>
            <person name="Grymonprez B."/>
            <person name="Weltjens I."/>
            <person name="Vanstreels E."/>
            <person name="Rieger M."/>
            <person name="Schaefer M."/>
            <person name="Mueller-Auer S."/>
            <person name="Gabel C."/>
            <person name="Fuchs M."/>
            <person name="Duesterhoeft A."/>
            <person name="Fritzc C."/>
            <person name="Holzer E."/>
            <person name="Moestl D."/>
            <person name="Hilbert H."/>
            <person name="Borzym K."/>
            <person name="Langer I."/>
            <person name="Beck A."/>
            <person name="Lehrach H."/>
            <person name="Reinhardt R."/>
            <person name="Pohl T.M."/>
            <person name="Eger P."/>
            <person name="Zimmermann W."/>
            <person name="Wedler H."/>
            <person name="Wambutt R."/>
            <person name="Purnelle B."/>
            <person name="Goffeau A."/>
            <person name="Cadieu E."/>
            <person name="Dreano S."/>
            <person name="Gloux S."/>
            <person name="Lelaure V."/>
            <person name="Mottier S."/>
            <person name="Galibert F."/>
            <person name="Aves S.J."/>
            <person name="Xiang Z."/>
            <person name="Hunt C."/>
            <person name="Moore K."/>
            <person name="Hurst S.M."/>
            <person name="Lucas M."/>
            <person name="Rochet M."/>
            <person name="Gaillardin C."/>
            <person name="Tallada V.A."/>
            <person name="Garzon A."/>
            <person name="Thode G."/>
            <person name="Daga R.R."/>
            <person name="Cruzado L."/>
            <person name="Jimenez J."/>
            <person name="Sanchez M."/>
            <person name="del Rey F."/>
            <person name="Benito J."/>
            <person name="Dominguez A."/>
            <person name="Revuelta J.L."/>
            <person name="Moreno S."/>
            <person name="Armstrong J."/>
            <person name="Forsburg S.L."/>
            <person name="Cerutti L."/>
            <person name="Lowe T."/>
            <person name="McCombie W.R."/>
            <person name="Paulsen I."/>
            <person name="Potashkin J."/>
            <person name="Shpakovski G.V."/>
            <person name="Ussery D."/>
            <person name="Barrell B.G."/>
            <person name="Nurse P."/>
        </authorList>
    </citation>
    <scope>NUCLEOTIDE SEQUENCE [LARGE SCALE GENOMIC DNA]</scope>
    <source>
        <strain>972 / ATCC 24843</strain>
    </source>
</reference>
<reference key="2">
    <citation type="journal article" date="2006" name="Nat. Biotechnol.">
        <title>ORFeome cloning and global analysis of protein localization in the fission yeast Schizosaccharomyces pombe.</title>
        <authorList>
            <person name="Matsuyama A."/>
            <person name="Arai R."/>
            <person name="Yashiroda Y."/>
            <person name="Shirai A."/>
            <person name="Kamata A."/>
            <person name="Sekido S."/>
            <person name="Kobayashi Y."/>
            <person name="Hashimoto A."/>
            <person name="Hamamoto M."/>
            <person name="Hiraoka Y."/>
            <person name="Horinouchi S."/>
            <person name="Yoshida M."/>
        </authorList>
    </citation>
    <scope>SUBCELLULAR LOCATION [LARGE SCALE ANALYSIS]</scope>
</reference>
<keyword id="KW-0002">3D-structure</keyword>
<keyword id="KW-0963">Cytoplasm</keyword>
<keyword id="KW-0396">Initiation factor</keyword>
<keyword id="KW-0539">Nucleus</keyword>
<keyword id="KW-0597">Phosphoprotein</keyword>
<keyword id="KW-0648">Protein biosynthesis</keyword>
<keyword id="KW-1185">Reference proteome</keyword>
<keyword id="KW-0690">Ribosome biogenesis</keyword>
<comment type="function">
    <text evidence="1">Binds to the 60S ribosomal subunit and prevents its association with the 40S ribosomal subunit to form the 80S initiation complex in the cytoplasm. Is also involved in ribosome biogenesis. Associates with pre-60S subunits in the nucleus and is involved in its nuclear export.</text>
</comment>
<comment type="subunit">
    <text evidence="1">Monomer. Associates with the 60S ribosomal subunit.</text>
</comment>
<comment type="subcellular location">
    <subcellularLocation>
        <location evidence="1 2">Cytoplasm</location>
    </subcellularLocation>
    <subcellularLocation>
        <location evidence="1">Nucleus</location>
        <location evidence="1">Nucleolus</location>
    </subcellularLocation>
    <text evidence="1">Shuttles between cytoplasm and nucleus/nucleolus.</text>
</comment>
<comment type="PTM">
    <text evidence="1">Phosphorylation at Ser-174 and Ser-175 promotes nuclear export.</text>
</comment>
<comment type="similarity">
    <text evidence="1">Belongs to the eIF-6 family.</text>
</comment>
<name>IF6_SCHPO</name>
<protein>
    <recommendedName>
        <fullName evidence="1">Eukaryotic translation initiation factor 6</fullName>
        <shortName evidence="1">eIF-6</shortName>
    </recommendedName>
</protein>